<comment type="function">
    <text evidence="1">Negatively regulates transcription of bacterial ribonucleotide reductase nrd genes and operons by binding to NrdR-boxes.</text>
</comment>
<comment type="cofactor">
    <cofactor evidence="1">
        <name>Zn(2+)</name>
        <dbReference type="ChEBI" id="CHEBI:29105"/>
    </cofactor>
    <text evidence="1">Binds 1 zinc ion.</text>
</comment>
<comment type="similarity">
    <text evidence="1">Belongs to the NrdR family.</text>
</comment>
<evidence type="ECO:0000255" key="1">
    <source>
        <dbReference type="HAMAP-Rule" id="MF_00440"/>
    </source>
</evidence>
<evidence type="ECO:0000256" key="2">
    <source>
        <dbReference type="SAM" id="MobiDB-lite"/>
    </source>
</evidence>
<protein>
    <recommendedName>
        <fullName evidence="1">Transcriptional repressor NrdR</fullName>
    </recommendedName>
</protein>
<dbReference type="EMBL" id="AE000513">
    <property type="protein sequence ID" value="AAF09680.1"/>
    <property type="molecule type" value="Genomic_DNA"/>
</dbReference>
<dbReference type="PIR" id="G75560">
    <property type="entry name" value="G75560"/>
</dbReference>
<dbReference type="RefSeq" id="NP_293813.1">
    <property type="nucleotide sequence ID" value="NC_001263.1"/>
</dbReference>
<dbReference type="RefSeq" id="WP_010886735.1">
    <property type="nucleotide sequence ID" value="NC_001263.1"/>
</dbReference>
<dbReference type="SMR" id="Q9RY63"/>
<dbReference type="FunCoup" id="Q9RY63">
    <property type="interactions" value="216"/>
</dbReference>
<dbReference type="STRING" id="243230.DR_0087"/>
<dbReference type="PaxDb" id="243230-DR_0087"/>
<dbReference type="EnsemblBacteria" id="AAF09680">
    <property type="protein sequence ID" value="AAF09680"/>
    <property type="gene ID" value="DR_0087"/>
</dbReference>
<dbReference type="GeneID" id="69516318"/>
<dbReference type="KEGG" id="dra:DR_0087"/>
<dbReference type="PATRIC" id="fig|243230.17.peg.251"/>
<dbReference type="eggNOG" id="COG1327">
    <property type="taxonomic scope" value="Bacteria"/>
</dbReference>
<dbReference type="HOGENOM" id="CLU_108412_0_0_0"/>
<dbReference type="InParanoid" id="Q9RY63"/>
<dbReference type="OrthoDB" id="9807461at2"/>
<dbReference type="Proteomes" id="UP000002524">
    <property type="component" value="Chromosome 1"/>
</dbReference>
<dbReference type="GO" id="GO:0005524">
    <property type="term" value="F:ATP binding"/>
    <property type="evidence" value="ECO:0007669"/>
    <property type="project" value="UniProtKB-KW"/>
</dbReference>
<dbReference type="GO" id="GO:0003690">
    <property type="term" value="F:double-stranded DNA binding"/>
    <property type="evidence" value="ECO:0000318"/>
    <property type="project" value="GO_Central"/>
</dbReference>
<dbReference type="GO" id="GO:0008270">
    <property type="term" value="F:zinc ion binding"/>
    <property type="evidence" value="ECO:0007669"/>
    <property type="project" value="UniProtKB-UniRule"/>
</dbReference>
<dbReference type="GO" id="GO:0045892">
    <property type="term" value="P:negative regulation of DNA-templated transcription"/>
    <property type="evidence" value="ECO:0000318"/>
    <property type="project" value="GO_Central"/>
</dbReference>
<dbReference type="HAMAP" id="MF_00440">
    <property type="entry name" value="NrdR"/>
    <property type="match status" value="1"/>
</dbReference>
<dbReference type="InterPro" id="IPR005144">
    <property type="entry name" value="ATP-cone_dom"/>
</dbReference>
<dbReference type="InterPro" id="IPR055173">
    <property type="entry name" value="NrdR-like_N"/>
</dbReference>
<dbReference type="InterPro" id="IPR003796">
    <property type="entry name" value="RNR_NrdR-like"/>
</dbReference>
<dbReference type="NCBIfam" id="TIGR00244">
    <property type="entry name" value="transcriptional regulator NrdR"/>
    <property type="match status" value="1"/>
</dbReference>
<dbReference type="PANTHER" id="PTHR30455">
    <property type="entry name" value="TRANSCRIPTIONAL REPRESSOR NRDR"/>
    <property type="match status" value="1"/>
</dbReference>
<dbReference type="PANTHER" id="PTHR30455:SF2">
    <property type="entry name" value="TRANSCRIPTIONAL REPRESSOR NRDR"/>
    <property type="match status" value="1"/>
</dbReference>
<dbReference type="Pfam" id="PF03477">
    <property type="entry name" value="ATP-cone"/>
    <property type="match status" value="1"/>
</dbReference>
<dbReference type="Pfam" id="PF22811">
    <property type="entry name" value="Zn_ribbon_NrdR"/>
    <property type="match status" value="1"/>
</dbReference>
<dbReference type="PROSITE" id="PS51161">
    <property type="entry name" value="ATP_CONE"/>
    <property type="match status" value="1"/>
</dbReference>
<name>NRDR_DEIRA</name>
<feature type="chain" id="PRO_0000182292" description="Transcriptional repressor NrdR">
    <location>
        <begin position="1"/>
        <end position="157"/>
    </location>
</feature>
<feature type="domain" description="ATP-cone" evidence="1">
    <location>
        <begin position="49"/>
        <end position="136"/>
    </location>
</feature>
<feature type="zinc finger region" evidence="1">
    <location>
        <begin position="3"/>
        <end position="34"/>
    </location>
</feature>
<feature type="region of interest" description="Disordered" evidence="2">
    <location>
        <begin position="1"/>
        <end position="22"/>
    </location>
</feature>
<feature type="compositionally biased region" description="Polar residues" evidence="2">
    <location>
        <begin position="8"/>
        <end position="17"/>
    </location>
</feature>
<proteinExistence type="inferred from homology"/>
<reference key="1">
    <citation type="journal article" date="1999" name="Science">
        <title>Genome sequence of the radioresistant bacterium Deinococcus radiodurans R1.</title>
        <authorList>
            <person name="White O."/>
            <person name="Eisen J.A."/>
            <person name="Heidelberg J.F."/>
            <person name="Hickey E.K."/>
            <person name="Peterson J.D."/>
            <person name="Dodson R.J."/>
            <person name="Haft D.H."/>
            <person name="Gwinn M.L."/>
            <person name="Nelson W.C."/>
            <person name="Richardson D.L."/>
            <person name="Moffat K.S."/>
            <person name="Qin H."/>
            <person name="Jiang L."/>
            <person name="Pamphile W."/>
            <person name="Crosby M."/>
            <person name="Shen M."/>
            <person name="Vamathevan J.J."/>
            <person name="Lam P."/>
            <person name="McDonald L.A."/>
            <person name="Utterback T.R."/>
            <person name="Zalewski C."/>
            <person name="Makarova K.S."/>
            <person name="Aravind L."/>
            <person name="Daly M.J."/>
            <person name="Minton K.W."/>
            <person name="Fleischmann R.D."/>
            <person name="Ketchum K.A."/>
            <person name="Nelson K.E."/>
            <person name="Salzberg S.L."/>
            <person name="Smith H.O."/>
            <person name="Venter J.C."/>
            <person name="Fraser C.M."/>
        </authorList>
    </citation>
    <scope>NUCLEOTIDE SEQUENCE [LARGE SCALE GENOMIC DNA]</scope>
    <source>
        <strain>ATCC 13939 / DSM 20539 / JCM 16871 / CCUG 27074 / LMG 4051 / NBRC 15346 / NCIMB 9279 / VKM B-1422 / R1</strain>
    </source>
</reference>
<keyword id="KW-0067">ATP-binding</keyword>
<keyword id="KW-0238">DNA-binding</keyword>
<keyword id="KW-0479">Metal-binding</keyword>
<keyword id="KW-0547">Nucleotide-binding</keyword>
<keyword id="KW-1185">Reference proteome</keyword>
<keyword id="KW-0678">Repressor</keyword>
<keyword id="KW-0804">Transcription</keyword>
<keyword id="KW-0805">Transcription regulation</keyword>
<keyword id="KW-0862">Zinc</keyword>
<keyword id="KW-0863">Zinc-finger</keyword>
<gene>
    <name evidence="1" type="primary">nrdR</name>
    <name type="ordered locus">DR_0087</name>
</gene>
<organism>
    <name type="scientific">Deinococcus radiodurans (strain ATCC 13939 / DSM 20539 / JCM 16871 / CCUG 27074 / LMG 4051 / NBRC 15346 / NCIMB 9279 / VKM B-1422 / R1)</name>
    <dbReference type="NCBI Taxonomy" id="243230"/>
    <lineage>
        <taxon>Bacteria</taxon>
        <taxon>Thermotogati</taxon>
        <taxon>Deinococcota</taxon>
        <taxon>Deinococci</taxon>
        <taxon>Deinococcales</taxon>
        <taxon>Deinococcaceae</taxon>
        <taxon>Deinococcus</taxon>
    </lineage>
</organism>
<sequence length="157" mass="17996">MKCPYCSSPDSRVINSRPSDDGASIRRRRECLTCTRRFTTYERAQLEPLMVVKRSGVREAFNPDKLLRGLALASEKRPVEEAALRTFAYSFEDEVQGGEIPTEEIGRRAMTFLRPLDDVAYIRFASVYRDFDSLERFIEEIRGLKGHEDEAPKSDPA</sequence>
<accession>Q9RY63</accession>